<organism>
    <name type="scientific">Aspergillus oryzae (strain ATCC 42149 / RIB 40)</name>
    <name type="common">Yellow koji mold</name>
    <dbReference type="NCBI Taxonomy" id="510516"/>
    <lineage>
        <taxon>Eukaryota</taxon>
        <taxon>Fungi</taxon>
        <taxon>Dikarya</taxon>
        <taxon>Ascomycota</taxon>
        <taxon>Pezizomycotina</taxon>
        <taxon>Eurotiomycetes</taxon>
        <taxon>Eurotiomycetidae</taxon>
        <taxon>Eurotiales</taxon>
        <taxon>Aspergillaceae</taxon>
        <taxon>Aspergillus</taxon>
        <taxon>Aspergillus subgen. Circumdati</taxon>
    </lineage>
</organism>
<name>RGLB_ASPOR</name>
<comment type="function">
    <text evidence="1">Pectinolytic enzymes consist of four classes of enzymes: pectin lyase, polygalacturonase, pectin methylesterase and rhamnogalacturonase. Degrades the rhamnogalacturonan I (RG-I) backbone of pectin (By similarity).</text>
</comment>
<comment type="catalytic activity">
    <reaction>
        <text>Endotype eliminative cleavage of L-alpha-rhamnopyranosyl-(1-&gt;4)-alpha-D-galactopyranosyluronic acid bonds of rhamnogalacturonan I domains in ramified hairy regions of pectin leaving L-rhamnopyranose at the reducing end and 4-deoxy-4,5-unsaturated D-galactopyranosyluronic acid at the non-reducing end.</text>
        <dbReference type="EC" id="4.2.2.23"/>
    </reaction>
</comment>
<comment type="subcellular location">
    <subcellularLocation>
        <location evidence="1">Secreted</location>
    </subcellularLocation>
</comment>
<comment type="similarity">
    <text evidence="3">Belongs to the polysaccharide lyase 4 family.</text>
</comment>
<feature type="signal peptide" evidence="2">
    <location>
        <begin position="1"/>
        <end position="19"/>
    </location>
</feature>
<feature type="chain" id="PRO_0000394376" description="Probable rhamnogalacturonate lyase B">
    <location>
        <begin position="20"/>
        <end position="238"/>
    </location>
</feature>
<feature type="glycosylation site" description="N-linked (GlcNAc...) asparagine" evidence="2">
    <location>
        <position position="27"/>
    </location>
</feature>
<feature type="glycosylation site" description="N-linked (GlcNAc...) asparagine" evidence="2">
    <location>
        <position position="110"/>
    </location>
</feature>
<feature type="glycosylation site" description="N-linked (GlcNAc...) asparagine" evidence="2">
    <location>
        <position position="143"/>
    </location>
</feature>
<dbReference type="EC" id="4.2.2.23"/>
<dbReference type="EMBL" id="BA000052">
    <property type="protein sequence ID" value="BAE60367.1"/>
    <property type="molecule type" value="Genomic_DNA"/>
</dbReference>
<dbReference type="STRING" id="510516.Q2UDJ8"/>
<dbReference type="GlyCosmos" id="Q2UDJ8">
    <property type="glycosylation" value="3 sites, No reported glycans"/>
</dbReference>
<dbReference type="EnsemblFungi" id="BAE60367">
    <property type="protein sequence ID" value="BAE60367"/>
    <property type="gene ID" value="AO090012000147"/>
</dbReference>
<dbReference type="HOGENOM" id="CLU_085593_0_0_1"/>
<dbReference type="Proteomes" id="UP000006564">
    <property type="component" value="Chromosome 4"/>
</dbReference>
<dbReference type="GO" id="GO:0005576">
    <property type="term" value="C:extracellular region"/>
    <property type="evidence" value="ECO:0007669"/>
    <property type="project" value="UniProtKB-SubCell"/>
</dbReference>
<dbReference type="GO" id="GO:0030246">
    <property type="term" value="F:carbohydrate binding"/>
    <property type="evidence" value="ECO:0007669"/>
    <property type="project" value="InterPro"/>
</dbReference>
<dbReference type="GO" id="GO:0102210">
    <property type="term" value="F:rhamnogalacturonan endolyase activity"/>
    <property type="evidence" value="ECO:0007669"/>
    <property type="project" value="UniProtKB-EC"/>
</dbReference>
<dbReference type="GO" id="GO:0071555">
    <property type="term" value="P:cell wall organization"/>
    <property type="evidence" value="ECO:0007669"/>
    <property type="project" value="UniProtKB-KW"/>
</dbReference>
<dbReference type="GO" id="GO:0000272">
    <property type="term" value="P:polysaccharide catabolic process"/>
    <property type="evidence" value="ECO:0007669"/>
    <property type="project" value="UniProtKB-KW"/>
</dbReference>
<dbReference type="InterPro" id="IPR011013">
    <property type="entry name" value="Gal_mutarotase_sf_dom"/>
</dbReference>
<dbReference type="SUPFAM" id="SSF74650">
    <property type="entry name" value="Galactose mutarotase-like"/>
    <property type="match status" value="1"/>
</dbReference>
<accession>Q2UDJ8</accession>
<gene>
    <name type="primary">rglB</name>
    <name type="ORF">AO090012000147</name>
</gene>
<proteinExistence type="inferred from homology"/>
<keyword id="KW-0119">Carbohydrate metabolism</keyword>
<keyword id="KW-0961">Cell wall biogenesis/degradation</keyword>
<keyword id="KW-0325">Glycoprotein</keyword>
<keyword id="KW-0456">Lyase</keyword>
<keyword id="KW-0624">Polysaccharide degradation</keyword>
<keyword id="KW-1185">Reference proteome</keyword>
<keyword id="KW-0964">Secreted</keyword>
<keyword id="KW-0732">Signal</keyword>
<reference key="1">
    <citation type="journal article" date="2005" name="Nature">
        <title>Genome sequencing and analysis of Aspergillus oryzae.</title>
        <authorList>
            <person name="Machida M."/>
            <person name="Asai K."/>
            <person name="Sano M."/>
            <person name="Tanaka T."/>
            <person name="Kumagai T."/>
            <person name="Terai G."/>
            <person name="Kusumoto K."/>
            <person name="Arima T."/>
            <person name="Akita O."/>
            <person name="Kashiwagi Y."/>
            <person name="Abe K."/>
            <person name="Gomi K."/>
            <person name="Horiuchi H."/>
            <person name="Kitamoto K."/>
            <person name="Kobayashi T."/>
            <person name="Takeuchi M."/>
            <person name="Denning D.W."/>
            <person name="Galagan J.E."/>
            <person name="Nierman W.C."/>
            <person name="Yu J."/>
            <person name="Archer D.B."/>
            <person name="Bennett J.W."/>
            <person name="Bhatnagar D."/>
            <person name="Cleveland T.E."/>
            <person name="Fedorova N.D."/>
            <person name="Gotoh O."/>
            <person name="Horikawa H."/>
            <person name="Hosoyama A."/>
            <person name="Ichinomiya M."/>
            <person name="Igarashi R."/>
            <person name="Iwashita K."/>
            <person name="Juvvadi P.R."/>
            <person name="Kato M."/>
            <person name="Kato Y."/>
            <person name="Kin T."/>
            <person name="Kokubun A."/>
            <person name="Maeda H."/>
            <person name="Maeyama N."/>
            <person name="Maruyama J."/>
            <person name="Nagasaki H."/>
            <person name="Nakajima T."/>
            <person name="Oda K."/>
            <person name="Okada K."/>
            <person name="Paulsen I."/>
            <person name="Sakamoto K."/>
            <person name="Sawano T."/>
            <person name="Takahashi M."/>
            <person name="Takase K."/>
            <person name="Terabayashi Y."/>
            <person name="Wortman J.R."/>
            <person name="Yamada O."/>
            <person name="Yamagata Y."/>
            <person name="Anazawa H."/>
            <person name="Hata Y."/>
            <person name="Koide Y."/>
            <person name="Komori T."/>
            <person name="Koyama Y."/>
            <person name="Minetoki T."/>
            <person name="Suharnan S."/>
            <person name="Tanaka A."/>
            <person name="Isono K."/>
            <person name="Kuhara S."/>
            <person name="Ogasawara N."/>
            <person name="Kikuchi H."/>
        </authorList>
    </citation>
    <scope>NUCLEOTIDE SEQUENCE [LARGE SCALE GENOMIC DNA]</scope>
    <source>
        <strain>ATCC 42149 / RIB 40</strain>
    </source>
</reference>
<protein>
    <recommendedName>
        <fullName>Probable rhamnogalacturonate lyase B</fullName>
        <ecNumber>4.2.2.23</ecNumber>
    </recommendedName>
</protein>
<evidence type="ECO:0000250" key="1"/>
<evidence type="ECO:0000255" key="2"/>
<evidence type="ECO:0000305" key="3"/>
<sequence length="238" mass="26531">MRLRTSLGVASACASVASAALKVTEDNSTITLANDRLTSTFAKDKGRVSELFLDGQDLLGPISGNTGVGPYLDCYCIPSGFYTAGSTDPRLEVVQGTDSTGTKYAGVILNDTYTPTGQQFQQYWFLRDGETGLHTFSRLAYYNETTPFLRNLQEFRTLFRPNTELWTHLTSSEAQTAPLPSKEAIANEVVVQDATWRFNNTPNDAYYTQFSEYFTKYTFSNCMGLFKTYWYAASANLQ</sequence>